<protein>
    <recommendedName>
        <fullName evidence="1">Large ribosomal subunit protein uL3</fullName>
    </recommendedName>
    <alternativeName>
        <fullName evidence="3">50S ribosomal protein L3</fullName>
    </alternativeName>
</protein>
<accession>Q7NPH0</accession>
<feature type="chain" id="PRO_0000077104" description="Large ribosomal subunit protein uL3">
    <location>
        <begin position="1"/>
        <end position="215"/>
    </location>
</feature>
<feature type="region of interest" description="Disordered" evidence="2">
    <location>
        <begin position="134"/>
        <end position="166"/>
    </location>
</feature>
<keyword id="KW-1185">Reference proteome</keyword>
<keyword id="KW-0687">Ribonucleoprotein</keyword>
<keyword id="KW-0689">Ribosomal protein</keyword>
<keyword id="KW-0694">RNA-binding</keyword>
<keyword id="KW-0699">rRNA-binding</keyword>
<gene>
    <name evidence="1" type="primary">rplC</name>
    <name evidence="1" type="synonym">rpl3</name>
    <name type="ordered locus">glr0085</name>
</gene>
<evidence type="ECO:0000255" key="1">
    <source>
        <dbReference type="HAMAP-Rule" id="MF_01325"/>
    </source>
</evidence>
<evidence type="ECO:0000256" key="2">
    <source>
        <dbReference type="SAM" id="MobiDB-lite"/>
    </source>
</evidence>
<evidence type="ECO:0000305" key="3"/>
<comment type="function">
    <text evidence="1">One of the primary rRNA binding proteins, it binds directly near the 3'-end of the 23S rRNA, where it nucleates assembly of the 50S subunit.</text>
</comment>
<comment type="subunit">
    <text evidence="1">Part of the 50S ribosomal subunit. Forms a cluster with proteins L14 and L19.</text>
</comment>
<comment type="similarity">
    <text evidence="1">Belongs to the universal ribosomal protein uL3 family.</text>
</comment>
<organism>
    <name type="scientific">Gloeobacter violaceus (strain ATCC 29082 / PCC 7421)</name>
    <dbReference type="NCBI Taxonomy" id="251221"/>
    <lineage>
        <taxon>Bacteria</taxon>
        <taxon>Bacillati</taxon>
        <taxon>Cyanobacteriota</taxon>
        <taxon>Cyanophyceae</taxon>
        <taxon>Gloeobacterales</taxon>
        <taxon>Gloeobacteraceae</taxon>
        <taxon>Gloeobacter</taxon>
    </lineage>
</organism>
<sequence>MSLGILGRKLGMTQIFDEEGRAIPVTVVEAGPCPVTQVKSEATDGYTAVQLGFGTAREKVLTRPEVGHCKKAGLEAPVRHLREFRLPDSSQYTPGQQITVDLFAAGQLVDVVGTSIGKGFAGGQKRHHFGRGPMAHGSKNHRAPGSIGAGTTPGRVFPGKRMPGRMGNERVTVRKLTVVRVIPERNVILIQGGLPGVEGGLLMISPAKSVGRAKG</sequence>
<name>RL3_GLOVI</name>
<dbReference type="EMBL" id="BA000045">
    <property type="protein sequence ID" value="BAC88026.1"/>
    <property type="molecule type" value="Genomic_DNA"/>
</dbReference>
<dbReference type="RefSeq" id="NP_923031.1">
    <property type="nucleotide sequence ID" value="NC_005125.1"/>
</dbReference>
<dbReference type="RefSeq" id="WP_011140089.1">
    <property type="nucleotide sequence ID" value="NC_005125.1"/>
</dbReference>
<dbReference type="SMR" id="Q7NPH0"/>
<dbReference type="FunCoup" id="Q7NPH0">
    <property type="interactions" value="395"/>
</dbReference>
<dbReference type="STRING" id="251221.gene:10757554"/>
<dbReference type="EnsemblBacteria" id="BAC88026">
    <property type="protein sequence ID" value="BAC88026"/>
    <property type="gene ID" value="BAC88026"/>
</dbReference>
<dbReference type="KEGG" id="gvi:glr0085"/>
<dbReference type="PATRIC" id="fig|251221.4.peg.87"/>
<dbReference type="eggNOG" id="COG0087">
    <property type="taxonomic scope" value="Bacteria"/>
</dbReference>
<dbReference type="HOGENOM" id="CLU_044142_4_1_3"/>
<dbReference type="InParanoid" id="Q7NPH0"/>
<dbReference type="OrthoDB" id="9806135at2"/>
<dbReference type="PhylomeDB" id="Q7NPH0"/>
<dbReference type="Proteomes" id="UP000000557">
    <property type="component" value="Chromosome"/>
</dbReference>
<dbReference type="GO" id="GO:0022625">
    <property type="term" value="C:cytosolic large ribosomal subunit"/>
    <property type="evidence" value="ECO:0000318"/>
    <property type="project" value="GO_Central"/>
</dbReference>
<dbReference type="GO" id="GO:0019843">
    <property type="term" value="F:rRNA binding"/>
    <property type="evidence" value="ECO:0007669"/>
    <property type="project" value="UniProtKB-UniRule"/>
</dbReference>
<dbReference type="GO" id="GO:0003735">
    <property type="term" value="F:structural constituent of ribosome"/>
    <property type="evidence" value="ECO:0000318"/>
    <property type="project" value="GO_Central"/>
</dbReference>
<dbReference type="GO" id="GO:0006412">
    <property type="term" value="P:translation"/>
    <property type="evidence" value="ECO:0007669"/>
    <property type="project" value="UniProtKB-UniRule"/>
</dbReference>
<dbReference type="FunFam" id="3.30.160.810:FF:000001">
    <property type="entry name" value="50S ribosomal protein L3"/>
    <property type="match status" value="1"/>
</dbReference>
<dbReference type="FunFam" id="2.40.30.10:FF:000065">
    <property type="entry name" value="50S ribosomal protein L3, chloroplastic"/>
    <property type="match status" value="1"/>
</dbReference>
<dbReference type="Gene3D" id="3.30.160.810">
    <property type="match status" value="1"/>
</dbReference>
<dbReference type="Gene3D" id="2.40.30.10">
    <property type="entry name" value="Translation factors"/>
    <property type="match status" value="1"/>
</dbReference>
<dbReference type="HAMAP" id="MF_01325_B">
    <property type="entry name" value="Ribosomal_uL3_B"/>
    <property type="match status" value="1"/>
</dbReference>
<dbReference type="InterPro" id="IPR000597">
    <property type="entry name" value="Ribosomal_uL3"/>
</dbReference>
<dbReference type="InterPro" id="IPR019927">
    <property type="entry name" value="Ribosomal_uL3_bac/org-type"/>
</dbReference>
<dbReference type="InterPro" id="IPR019926">
    <property type="entry name" value="Ribosomal_uL3_CS"/>
</dbReference>
<dbReference type="InterPro" id="IPR009000">
    <property type="entry name" value="Transl_B-barrel_sf"/>
</dbReference>
<dbReference type="NCBIfam" id="TIGR03625">
    <property type="entry name" value="L3_bact"/>
    <property type="match status" value="1"/>
</dbReference>
<dbReference type="PANTHER" id="PTHR11229">
    <property type="entry name" value="50S RIBOSOMAL PROTEIN L3"/>
    <property type="match status" value="1"/>
</dbReference>
<dbReference type="PANTHER" id="PTHR11229:SF16">
    <property type="entry name" value="LARGE RIBOSOMAL SUBUNIT PROTEIN UL3C"/>
    <property type="match status" value="1"/>
</dbReference>
<dbReference type="Pfam" id="PF00297">
    <property type="entry name" value="Ribosomal_L3"/>
    <property type="match status" value="1"/>
</dbReference>
<dbReference type="SUPFAM" id="SSF50447">
    <property type="entry name" value="Translation proteins"/>
    <property type="match status" value="1"/>
</dbReference>
<dbReference type="PROSITE" id="PS00474">
    <property type="entry name" value="RIBOSOMAL_L3"/>
    <property type="match status" value="1"/>
</dbReference>
<reference key="1">
    <citation type="journal article" date="2003" name="DNA Res.">
        <title>Complete genome structure of Gloeobacter violaceus PCC 7421, a cyanobacterium that lacks thylakoids.</title>
        <authorList>
            <person name="Nakamura Y."/>
            <person name="Kaneko T."/>
            <person name="Sato S."/>
            <person name="Mimuro M."/>
            <person name="Miyashita H."/>
            <person name="Tsuchiya T."/>
            <person name="Sasamoto S."/>
            <person name="Watanabe A."/>
            <person name="Kawashima K."/>
            <person name="Kishida Y."/>
            <person name="Kiyokawa C."/>
            <person name="Kohara M."/>
            <person name="Matsumoto M."/>
            <person name="Matsuno A."/>
            <person name="Nakazaki N."/>
            <person name="Shimpo S."/>
            <person name="Takeuchi C."/>
            <person name="Yamada M."/>
            <person name="Tabata S."/>
        </authorList>
    </citation>
    <scope>NUCLEOTIDE SEQUENCE [LARGE SCALE GENOMIC DNA]</scope>
    <source>
        <strain>ATCC 29082 / PCC 7421</strain>
    </source>
</reference>
<proteinExistence type="inferred from homology"/>